<evidence type="ECO:0000250" key="1"/>
<evidence type="ECO:0000255" key="2">
    <source>
        <dbReference type="HAMAP-Rule" id="MF_01045"/>
    </source>
</evidence>
<evidence type="ECO:0000305" key="3"/>
<sequence>MPLHNLTRFPRLEFIGAPTPLEYLPRFSDYLGREIFIKRDEVTPMAMGGNKLRKLEFLAADALREGADTLITAGAIQSNHVRQTAAVAAKLGLHCVALLENPIGTTAENYLTNGNRLLLDLFNTQIEMCDALTDPNAQLEELATRVEAQGFRPYVIPVGGSNALGALGYVESALEIAQQCEGAVNISSVVVASGSAGTHAGLAVGLEHLMPESELIGVTVSRSVADQLPKVVNLQQAIAKELELTASAEILLWDDYFAPGYGVPNDEGMEAVKLLARLEGILLDPVYTGKAMAGLIDGISQKRFKDEGPILFIHTGGAPALFAYHPHV</sequence>
<protein>
    <recommendedName>
        <fullName evidence="2">D-cysteine desulfhydrase</fullName>
        <ecNumber evidence="2">4.4.1.15</ecNumber>
    </recommendedName>
</protein>
<feature type="initiator methionine" description="Removed" evidence="1">
    <location>
        <position position="1"/>
    </location>
</feature>
<feature type="chain" id="PRO_0000184518" description="D-cysteine desulfhydrase">
    <location>
        <begin position="2"/>
        <end position="328"/>
    </location>
</feature>
<feature type="modified residue" description="N6-(pyridoxal phosphate)lysine" evidence="2">
    <location>
        <position position="51"/>
    </location>
</feature>
<reference key="1">
    <citation type="journal article" date="2002" name="Nucleic Acids Res.">
        <title>Genome sequence of Shigella flexneri 2a: insights into pathogenicity through comparison with genomes of Escherichia coli K12 and O157.</title>
        <authorList>
            <person name="Jin Q."/>
            <person name="Yuan Z."/>
            <person name="Xu J."/>
            <person name="Wang Y."/>
            <person name="Shen Y."/>
            <person name="Lu W."/>
            <person name="Wang J."/>
            <person name="Liu H."/>
            <person name="Yang J."/>
            <person name="Yang F."/>
            <person name="Zhang X."/>
            <person name="Zhang J."/>
            <person name="Yang G."/>
            <person name="Wu H."/>
            <person name="Qu D."/>
            <person name="Dong J."/>
            <person name="Sun L."/>
            <person name="Xue Y."/>
            <person name="Zhao A."/>
            <person name="Gao Y."/>
            <person name="Zhu J."/>
            <person name="Kan B."/>
            <person name="Ding K."/>
            <person name="Chen S."/>
            <person name="Cheng H."/>
            <person name="Yao Z."/>
            <person name="He B."/>
            <person name="Chen R."/>
            <person name="Ma D."/>
            <person name="Qiang B."/>
            <person name="Wen Y."/>
            <person name="Hou Y."/>
            <person name="Yu J."/>
        </authorList>
    </citation>
    <scope>NUCLEOTIDE SEQUENCE [LARGE SCALE GENOMIC DNA]</scope>
    <source>
        <strain>301 / Serotype 2a</strain>
    </source>
</reference>
<reference key="2">
    <citation type="journal article" date="2003" name="Infect. Immun.">
        <title>Complete genome sequence and comparative genomics of Shigella flexneri serotype 2a strain 2457T.</title>
        <authorList>
            <person name="Wei J."/>
            <person name="Goldberg M.B."/>
            <person name="Burland V."/>
            <person name="Venkatesan M.M."/>
            <person name="Deng W."/>
            <person name="Fournier G."/>
            <person name="Mayhew G.F."/>
            <person name="Plunkett G. III"/>
            <person name="Rose D.J."/>
            <person name="Darling A."/>
            <person name="Mau B."/>
            <person name="Perna N.T."/>
            <person name="Payne S.M."/>
            <person name="Runyen-Janecky L.J."/>
            <person name="Zhou S."/>
            <person name="Schwartz D.C."/>
            <person name="Blattner F.R."/>
        </authorList>
    </citation>
    <scope>NUCLEOTIDE SEQUENCE [LARGE SCALE GENOMIC DNA]</scope>
    <source>
        <strain>ATCC 700930 / 2457T / Serotype 2a</strain>
    </source>
</reference>
<name>DCYD_SHIFL</name>
<keyword id="KW-0456">Lyase</keyword>
<keyword id="KW-0663">Pyridoxal phosphate</keyword>
<keyword id="KW-1185">Reference proteome</keyword>
<comment type="function">
    <text evidence="2">Catalyzes the alpha,beta-elimination reaction of D-cysteine and of several D-cysteine derivatives. It could be a defense mechanism against D-cysteine.</text>
</comment>
<comment type="catalytic activity">
    <reaction evidence="2">
        <text>D-cysteine + H2O = hydrogen sulfide + pyruvate + NH4(+) + H(+)</text>
        <dbReference type="Rhea" id="RHEA:11268"/>
        <dbReference type="ChEBI" id="CHEBI:15361"/>
        <dbReference type="ChEBI" id="CHEBI:15377"/>
        <dbReference type="ChEBI" id="CHEBI:15378"/>
        <dbReference type="ChEBI" id="CHEBI:28938"/>
        <dbReference type="ChEBI" id="CHEBI:29919"/>
        <dbReference type="ChEBI" id="CHEBI:35236"/>
        <dbReference type="EC" id="4.4.1.15"/>
    </reaction>
</comment>
<comment type="cofactor">
    <cofactor evidence="2">
        <name>pyridoxal 5'-phosphate</name>
        <dbReference type="ChEBI" id="CHEBI:597326"/>
    </cofactor>
</comment>
<comment type="subunit">
    <text evidence="2">Homodimer.</text>
</comment>
<comment type="similarity">
    <text evidence="2">Belongs to the ACC deaminase/D-cysteine desulfhydrase family.</text>
</comment>
<comment type="sequence caution" evidence="3">
    <conflict type="erroneous initiation">
        <sequence resource="EMBL-CDS" id="AAN43513"/>
    </conflict>
</comment>
<comment type="sequence caution" evidence="3">
    <conflict type="erroneous initiation">
        <sequence resource="EMBL-CDS" id="AAP17343"/>
    </conflict>
</comment>
<organism>
    <name type="scientific">Shigella flexneri</name>
    <dbReference type="NCBI Taxonomy" id="623"/>
    <lineage>
        <taxon>Bacteria</taxon>
        <taxon>Pseudomonadati</taxon>
        <taxon>Pseudomonadota</taxon>
        <taxon>Gammaproteobacteria</taxon>
        <taxon>Enterobacterales</taxon>
        <taxon>Enterobacteriaceae</taxon>
        <taxon>Shigella</taxon>
    </lineage>
</organism>
<dbReference type="EC" id="4.4.1.15" evidence="2"/>
<dbReference type="EMBL" id="AE005674">
    <property type="protein sequence ID" value="AAN43513.1"/>
    <property type="status" value="ALT_INIT"/>
    <property type="molecule type" value="Genomic_DNA"/>
</dbReference>
<dbReference type="EMBL" id="AE014073">
    <property type="protein sequence ID" value="AAP17343.1"/>
    <property type="status" value="ALT_INIT"/>
    <property type="molecule type" value="Genomic_DNA"/>
</dbReference>
<dbReference type="RefSeq" id="WP_001128248.1">
    <property type="nucleotide sequence ID" value="NZ_WPGW01000033.1"/>
</dbReference>
<dbReference type="SMR" id="P59330"/>
<dbReference type="STRING" id="198214.SF1962"/>
<dbReference type="PaxDb" id="198214-SF1962"/>
<dbReference type="KEGG" id="sfl:SF1962"/>
<dbReference type="KEGG" id="sfx:S2058"/>
<dbReference type="PATRIC" id="fig|198214.7.peg.2342"/>
<dbReference type="HOGENOM" id="CLU_048897_1_0_6"/>
<dbReference type="Proteomes" id="UP000001006">
    <property type="component" value="Chromosome"/>
</dbReference>
<dbReference type="Proteomes" id="UP000002673">
    <property type="component" value="Chromosome"/>
</dbReference>
<dbReference type="GO" id="GO:0019148">
    <property type="term" value="F:D-cysteine desulfhydrase activity"/>
    <property type="evidence" value="ECO:0007669"/>
    <property type="project" value="UniProtKB-UniRule"/>
</dbReference>
<dbReference type="GO" id="GO:0046416">
    <property type="term" value="P:D-amino acid metabolic process"/>
    <property type="evidence" value="ECO:0007669"/>
    <property type="project" value="UniProtKB-UniRule"/>
</dbReference>
<dbReference type="CDD" id="cd06449">
    <property type="entry name" value="ACCD"/>
    <property type="match status" value="1"/>
</dbReference>
<dbReference type="FunFam" id="3.40.50.1100:FF:000019">
    <property type="entry name" value="D-cysteine desulfhydrase"/>
    <property type="match status" value="1"/>
</dbReference>
<dbReference type="Gene3D" id="3.40.50.1100">
    <property type="match status" value="2"/>
</dbReference>
<dbReference type="HAMAP" id="MF_01045">
    <property type="entry name" value="D_Cys_desulfhydr"/>
    <property type="match status" value="1"/>
</dbReference>
<dbReference type="InterPro" id="IPR027278">
    <property type="entry name" value="ACCD_DCysDesulf"/>
</dbReference>
<dbReference type="InterPro" id="IPR005966">
    <property type="entry name" value="D-Cys_desShydrase"/>
</dbReference>
<dbReference type="InterPro" id="IPR023702">
    <property type="entry name" value="D_Cys_desulphydr_bac"/>
</dbReference>
<dbReference type="InterPro" id="IPR001926">
    <property type="entry name" value="TrpB-like_PALP"/>
</dbReference>
<dbReference type="InterPro" id="IPR036052">
    <property type="entry name" value="TrpB-like_PALP_sf"/>
</dbReference>
<dbReference type="NCBIfam" id="TIGR01275">
    <property type="entry name" value="ACC_deam_rel"/>
    <property type="match status" value="1"/>
</dbReference>
<dbReference type="NCBIfam" id="NF003029">
    <property type="entry name" value="PRK03910.1-1"/>
    <property type="match status" value="1"/>
</dbReference>
<dbReference type="NCBIfam" id="NF003030">
    <property type="entry name" value="PRK03910.1-3"/>
    <property type="match status" value="1"/>
</dbReference>
<dbReference type="NCBIfam" id="NF003032">
    <property type="entry name" value="PRK03910.1-5"/>
    <property type="match status" value="1"/>
</dbReference>
<dbReference type="PANTHER" id="PTHR43780">
    <property type="entry name" value="1-AMINOCYCLOPROPANE-1-CARBOXYLATE DEAMINASE-RELATED"/>
    <property type="match status" value="1"/>
</dbReference>
<dbReference type="PANTHER" id="PTHR43780:SF2">
    <property type="entry name" value="1-AMINOCYCLOPROPANE-1-CARBOXYLATE DEAMINASE-RELATED"/>
    <property type="match status" value="1"/>
</dbReference>
<dbReference type="Pfam" id="PF00291">
    <property type="entry name" value="PALP"/>
    <property type="match status" value="1"/>
</dbReference>
<dbReference type="PIRSF" id="PIRSF006278">
    <property type="entry name" value="ACCD_DCysDesulf"/>
    <property type="match status" value="1"/>
</dbReference>
<dbReference type="SUPFAM" id="SSF53686">
    <property type="entry name" value="Tryptophan synthase beta subunit-like PLP-dependent enzymes"/>
    <property type="match status" value="1"/>
</dbReference>
<accession>P59330</accession>
<proteinExistence type="inferred from homology"/>
<gene>
    <name evidence="2" type="primary">dcyD</name>
    <name type="ordered locus">SF1962</name>
    <name type="ordered locus">S2058</name>
</gene>